<reference key="1">
    <citation type="journal article" date="2003" name="Proc. Natl. Acad. Sci. U.S.A.">
        <title>Complete genome sequence of the Q-fever pathogen, Coxiella burnetii.</title>
        <authorList>
            <person name="Seshadri R."/>
            <person name="Paulsen I.T."/>
            <person name="Eisen J.A."/>
            <person name="Read T.D."/>
            <person name="Nelson K.E."/>
            <person name="Nelson W.C."/>
            <person name="Ward N.L."/>
            <person name="Tettelin H."/>
            <person name="Davidsen T.M."/>
            <person name="Beanan M.J."/>
            <person name="DeBoy R.T."/>
            <person name="Daugherty S.C."/>
            <person name="Brinkac L.M."/>
            <person name="Madupu R."/>
            <person name="Dodson R.J."/>
            <person name="Khouri H.M."/>
            <person name="Lee K.H."/>
            <person name="Carty H.A."/>
            <person name="Scanlan D."/>
            <person name="Heinzen R.A."/>
            <person name="Thompson H.A."/>
            <person name="Samuel J.E."/>
            <person name="Fraser C.M."/>
            <person name="Heidelberg J.F."/>
        </authorList>
    </citation>
    <scope>NUCLEOTIDE SEQUENCE [LARGE SCALE GENOMIC DNA]</scope>
    <source>
        <strain>RSA 493 / Nine Mile phase I</strain>
    </source>
</reference>
<accession>Q83EK7</accession>
<gene>
    <name evidence="1" type="primary">folD</name>
    <name type="ordered locus">CBU_0312</name>
</gene>
<dbReference type="EC" id="1.5.1.5" evidence="1"/>
<dbReference type="EC" id="3.5.4.9" evidence="1"/>
<dbReference type="EMBL" id="AE016828">
    <property type="protein sequence ID" value="AAO89869.1"/>
    <property type="molecule type" value="Genomic_DNA"/>
</dbReference>
<dbReference type="RefSeq" id="NP_819355.1">
    <property type="nucleotide sequence ID" value="NC_002971.4"/>
</dbReference>
<dbReference type="RefSeq" id="WP_010957497.1">
    <property type="nucleotide sequence ID" value="NC_002971.4"/>
</dbReference>
<dbReference type="SMR" id="Q83EK7"/>
<dbReference type="STRING" id="227377.CBU_0312"/>
<dbReference type="EnsemblBacteria" id="AAO89869">
    <property type="protein sequence ID" value="AAO89869"/>
    <property type="gene ID" value="CBU_0312"/>
</dbReference>
<dbReference type="GeneID" id="1208194"/>
<dbReference type="KEGG" id="cbu:CBU_0312"/>
<dbReference type="PATRIC" id="fig|227377.7.peg.304"/>
<dbReference type="eggNOG" id="COG0190">
    <property type="taxonomic scope" value="Bacteria"/>
</dbReference>
<dbReference type="HOGENOM" id="CLU_034045_2_1_6"/>
<dbReference type="OrthoDB" id="9803580at2"/>
<dbReference type="UniPathway" id="UPA00193"/>
<dbReference type="Proteomes" id="UP000002671">
    <property type="component" value="Chromosome"/>
</dbReference>
<dbReference type="GO" id="GO:0005829">
    <property type="term" value="C:cytosol"/>
    <property type="evidence" value="ECO:0000318"/>
    <property type="project" value="GO_Central"/>
</dbReference>
<dbReference type="GO" id="GO:0004477">
    <property type="term" value="F:methenyltetrahydrofolate cyclohydrolase activity"/>
    <property type="evidence" value="ECO:0000318"/>
    <property type="project" value="GO_Central"/>
</dbReference>
<dbReference type="GO" id="GO:0004488">
    <property type="term" value="F:methylenetetrahydrofolate dehydrogenase (NADP+) activity"/>
    <property type="evidence" value="ECO:0000318"/>
    <property type="project" value="GO_Central"/>
</dbReference>
<dbReference type="GO" id="GO:0000105">
    <property type="term" value="P:L-histidine biosynthetic process"/>
    <property type="evidence" value="ECO:0007669"/>
    <property type="project" value="UniProtKB-KW"/>
</dbReference>
<dbReference type="GO" id="GO:0009086">
    <property type="term" value="P:methionine biosynthetic process"/>
    <property type="evidence" value="ECO:0007669"/>
    <property type="project" value="UniProtKB-KW"/>
</dbReference>
<dbReference type="GO" id="GO:0006164">
    <property type="term" value="P:purine nucleotide biosynthetic process"/>
    <property type="evidence" value="ECO:0007669"/>
    <property type="project" value="UniProtKB-KW"/>
</dbReference>
<dbReference type="GO" id="GO:0035999">
    <property type="term" value="P:tetrahydrofolate interconversion"/>
    <property type="evidence" value="ECO:0000318"/>
    <property type="project" value="GO_Central"/>
</dbReference>
<dbReference type="CDD" id="cd01080">
    <property type="entry name" value="NAD_bind_m-THF_DH_Cyclohyd"/>
    <property type="match status" value="1"/>
</dbReference>
<dbReference type="FunFam" id="3.40.50.720:FF:000006">
    <property type="entry name" value="Bifunctional protein FolD"/>
    <property type="match status" value="1"/>
</dbReference>
<dbReference type="FunFam" id="3.40.50.10860:FF:000005">
    <property type="entry name" value="C-1-tetrahydrofolate synthase, cytoplasmic, putative"/>
    <property type="match status" value="1"/>
</dbReference>
<dbReference type="Gene3D" id="3.40.50.10860">
    <property type="entry name" value="Leucine Dehydrogenase, chain A, domain 1"/>
    <property type="match status" value="1"/>
</dbReference>
<dbReference type="Gene3D" id="3.40.50.720">
    <property type="entry name" value="NAD(P)-binding Rossmann-like Domain"/>
    <property type="match status" value="1"/>
</dbReference>
<dbReference type="HAMAP" id="MF_01576">
    <property type="entry name" value="THF_DHG_CYH"/>
    <property type="match status" value="1"/>
</dbReference>
<dbReference type="InterPro" id="IPR046346">
    <property type="entry name" value="Aminoacid_DH-like_N_sf"/>
</dbReference>
<dbReference type="InterPro" id="IPR036291">
    <property type="entry name" value="NAD(P)-bd_dom_sf"/>
</dbReference>
<dbReference type="InterPro" id="IPR000672">
    <property type="entry name" value="THF_DH/CycHdrlase"/>
</dbReference>
<dbReference type="InterPro" id="IPR020630">
    <property type="entry name" value="THF_DH/CycHdrlase_cat_dom"/>
</dbReference>
<dbReference type="InterPro" id="IPR020867">
    <property type="entry name" value="THF_DH/CycHdrlase_CS"/>
</dbReference>
<dbReference type="InterPro" id="IPR020631">
    <property type="entry name" value="THF_DH/CycHdrlase_NAD-bd_dom"/>
</dbReference>
<dbReference type="NCBIfam" id="NF008058">
    <property type="entry name" value="PRK10792.1"/>
    <property type="match status" value="1"/>
</dbReference>
<dbReference type="NCBIfam" id="NF010783">
    <property type="entry name" value="PRK14186.1"/>
    <property type="match status" value="1"/>
</dbReference>
<dbReference type="PANTHER" id="PTHR48099:SF5">
    <property type="entry name" value="C-1-TETRAHYDROFOLATE SYNTHASE, CYTOPLASMIC"/>
    <property type="match status" value="1"/>
</dbReference>
<dbReference type="PANTHER" id="PTHR48099">
    <property type="entry name" value="C-1-TETRAHYDROFOLATE SYNTHASE, CYTOPLASMIC-RELATED"/>
    <property type="match status" value="1"/>
</dbReference>
<dbReference type="Pfam" id="PF00763">
    <property type="entry name" value="THF_DHG_CYH"/>
    <property type="match status" value="1"/>
</dbReference>
<dbReference type="Pfam" id="PF02882">
    <property type="entry name" value="THF_DHG_CYH_C"/>
    <property type="match status" value="1"/>
</dbReference>
<dbReference type="PRINTS" id="PR00085">
    <property type="entry name" value="THFDHDRGNASE"/>
</dbReference>
<dbReference type="SUPFAM" id="SSF53223">
    <property type="entry name" value="Aminoacid dehydrogenase-like, N-terminal domain"/>
    <property type="match status" value="1"/>
</dbReference>
<dbReference type="SUPFAM" id="SSF51735">
    <property type="entry name" value="NAD(P)-binding Rossmann-fold domains"/>
    <property type="match status" value="1"/>
</dbReference>
<dbReference type="PROSITE" id="PS00767">
    <property type="entry name" value="THF_DHG_CYH_2"/>
    <property type="match status" value="1"/>
</dbReference>
<organism>
    <name type="scientific">Coxiella burnetii (strain RSA 493 / Nine Mile phase I)</name>
    <dbReference type="NCBI Taxonomy" id="227377"/>
    <lineage>
        <taxon>Bacteria</taxon>
        <taxon>Pseudomonadati</taxon>
        <taxon>Pseudomonadota</taxon>
        <taxon>Gammaproteobacteria</taxon>
        <taxon>Legionellales</taxon>
        <taxon>Coxiellaceae</taxon>
        <taxon>Coxiella</taxon>
    </lineage>
</organism>
<keyword id="KW-0028">Amino-acid biosynthesis</keyword>
<keyword id="KW-0368">Histidine biosynthesis</keyword>
<keyword id="KW-0378">Hydrolase</keyword>
<keyword id="KW-0486">Methionine biosynthesis</keyword>
<keyword id="KW-0511">Multifunctional enzyme</keyword>
<keyword id="KW-0521">NADP</keyword>
<keyword id="KW-0554">One-carbon metabolism</keyword>
<keyword id="KW-0560">Oxidoreductase</keyword>
<keyword id="KW-0658">Purine biosynthesis</keyword>
<keyword id="KW-1185">Reference proteome</keyword>
<sequence length="283" mass="30820">MIARILDGRTCAEKVKARVKENIRLLQEKGLPSPGLAVILVGNDPASATYVAHKERACQAVGIRSTVYRMPNTITESELASKIDECNRDSNTHGILLQLPLPAHIDPANLLERIRPDKDVDGFHPYNLGRLVQRRPALRPCTPYGVMTLLTETHENLEGKHAVIVGASNIVGRPMALELLLAKCTVTVCHRFTRDLAEHVKSAELLIVAIGKPGIIQSEWIKPGAIVIDVGFSRLSPNKIAGDIDFETAKERASWITPVPGGVGPMTVATLLENTLQAAQTFL</sequence>
<proteinExistence type="inferred from homology"/>
<feature type="chain" id="PRO_0000268327" description="Bifunctional protein FolD">
    <location>
        <begin position="1"/>
        <end position="283"/>
    </location>
</feature>
<feature type="binding site" evidence="1">
    <location>
        <begin position="166"/>
        <end position="168"/>
    </location>
    <ligand>
        <name>NADP(+)</name>
        <dbReference type="ChEBI" id="CHEBI:58349"/>
    </ligand>
</feature>
<protein>
    <recommendedName>
        <fullName evidence="1">Bifunctional protein FolD</fullName>
    </recommendedName>
    <domain>
        <recommendedName>
            <fullName evidence="1">Methylenetetrahydrofolate dehydrogenase</fullName>
            <ecNumber evidence="1">1.5.1.5</ecNumber>
        </recommendedName>
    </domain>
    <domain>
        <recommendedName>
            <fullName evidence="1">Methenyltetrahydrofolate cyclohydrolase</fullName>
            <ecNumber evidence="1">3.5.4.9</ecNumber>
        </recommendedName>
    </domain>
</protein>
<comment type="function">
    <text evidence="1">Catalyzes the oxidation of 5,10-methylenetetrahydrofolate to 5,10-methenyltetrahydrofolate and then the hydrolysis of 5,10-methenyltetrahydrofolate to 10-formyltetrahydrofolate.</text>
</comment>
<comment type="catalytic activity">
    <reaction evidence="1">
        <text>(6R)-5,10-methylene-5,6,7,8-tetrahydrofolate + NADP(+) = (6R)-5,10-methenyltetrahydrofolate + NADPH</text>
        <dbReference type="Rhea" id="RHEA:22812"/>
        <dbReference type="ChEBI" id="CHEBI:15636"/>
        <dbReference type="ChEBI" id="CHEBI:57455"/>
        <dbReference type="ChEBI" id="CHEBI:57783"/>
        <dbReference type="ChEBI" id="CHEBI:58349"/>
        <dbReference type="EC" id="1.5.1.5"/>
    </reaction>
</comment>
<comment type="catalytic activity">
    <reaction evidence="1">
        <text>(6R)-5,10-methenyltetrahydrofolate + H2O = (6R)-10-formyltetrahydrofolate + H(+)</text>
        <dbReference type="Rhea" id="RHEA:23700"/>
        <dbReference type="ChEBI" id="CHEBI:15377"/>
        <dbReference type="ChEBI" id="CHEBI:15378"/>
        <dbReference type="ChEBI" id="CHEBI:57455"/>
        <dbReference type="ChEBI" id="CHEBI:195366"/>
        <dbReference type="EC" id="3.5.4.9"/>
    </reaction>
</comment>
<comment type="pathway">
    <text evidence="1">One-carbon metabolism; tetrahydrofolate interconversion.</text>
</comment>
<comment type="subunit">
    <text evidence="1">Homodimer.</text>
</comment>
<comment type="similarity">
    <text evidence="1">Belongs to the tetrahydrofolate dehydrogenase/cyclohydrolase family.</text>
</comment>
<name>FOLD_COXBU</name>
<evidence type="ECO:0000255" key="1">
    <source>
        <dbReference type="HAMAP-Rule" id="MF_01576"/>
    </source>
</evidence>